<keyword id="KW-0004">4Fe-4S</keyword>
<keyword id="KW-0028">Amino-acid biosynthesis</keyword>
<keyword id="KW-0100">Branched-chain amino acid biosynthesis</keyword>
<keyword id="KW-0408">Iron</keyword>
<keyword id="KW-0411">Iron-sulfur</keyword>
<keyword id="KW-0432">Leucine biosynthesis</keyword>
<keyword id="KW-0456">Lyase</keyword>
<keyword id="KW-0479">Metal-binding</keyword>
<dbReference type="EC" id="4.2.1.33" evidence="1"/>
<dbReference type="EMBL" id="CP000085">
    <property type="protein sequence ID" value="ABC34998.1"/>
    <property type="molecule type" value="Genomic_DNA"/>
</dbReference>
<dbReference type="RefSeq" id="WP_009895837.1">
    <property type="nucleotide sequence ID" value="NZ_CP008786.1"/>
</dbReference>
<dbReference type="SMR" id="Q2T7H8"/>
<dbReference type="GeneID" id="45118159"/>
<dbReference type="KEGG" id="bte:BTH_II0672"/>
<dbReference type="HOGENOM" id="CLU_006714_3_4_4"/>
<dbReference type="UniPathway" id="UPA00048">
    <property type="reaction ID" value="UER00071"/>
</dbReference>
<dbReference type="Proteomes" id="UP000001930">
    <property type="component" value="Chromosome II"/>
</dbReference>
<dbReference type="GO" id="GO:0003861">
    <property type="term" value="F:3-isopropylmalate dehydratase activity"/>
    <property type="evidence" value="ECO:0007669"/>
    <property type="project" value="UniProtKB-UniRule"/>
</dbReference>
<dbReference type="GO" id="GO:0051539">
    <property type="term" value="F:4 iron, 4 sulfur cluster binding"/>
    <property type="evidence" value="ECO:0007669"/>
    <property type="project" value="UniProtKB-KW"/>
</dbReference>
<dbReference type="GO" id="GO:0046872">
    <property type="term" value="F:metal ion binding"/>
    <property type="evidence" value="ECO:0007669"/>
    <property type="project" value="UniProtKB-KW"/>
</dbReference>
<dbReference type="GO" id="GO:0009098">
    <property type="term" value="P:L-leucine biosynthetic process"/>
    <property type="evidence" value="ECO:0007669"/>
    <property type="project" value="UniProtKB-UniRule"/>
</dbReference>
<dbReference type="CDD" id="cd01583">
    <property type="entry name" value="IPMI"/>
    <property type="match status" value="1"/>
</dbReference>
<dbReference type="FunFam" id="3.30.499.10:FF:000007">
    <property type="entry name" value="3-isopropylmalate dehydratase large subunit"/>
    <property type="match status" value="1"/>
</dbReference>
<dbReference type="Gene3D" id="3.30.499.10">
    <property type="entry name" value="Aconitase, domain 3"/>
    <property type="match status" value="2"/>
</dbReference>
<dbReference type="HAMAP" id="MF_01026">
    <property type="entry name" value="LeuC_type1"/>
    <property type="match status" value="1"/>
</dbReference>
<dbReference type="InterPro" id="IPR004430">
    <property type="entry name" value="3-IsopropMal_deHydase_lsu"/>
</dbReference>
<dbReference type="InterPro" id="IPR015931">
    <property type="entry name" value="Acnase/IPM_dHydase_lsu_aba_1/3"/>
</dbReference>
<dbReference type="InterPro" id="IPR001030">
    <property type="entry name" value="Acoase/IPM_deHydtase_lsu_aba"/>
</dbReference>
<dbReference type="InterPro" id="IPR018136">
    <property type="entry name" value="Aconitase_4Fe-4S_BS"/>
</dbReference>
<dbReference type="InterPro" id="IPR036008">
    <property type="entry name" value="Aconitase_4Fe-4S_dom"/>
</dbReference>
<dbReference type="InterPro" id="IPR050067">
    <property type="entry name" value="IPM_dehydratase_rel_enz"/>
</dbReference>
<dbReference type="InterPro" id="IPR033941">
    <property type="entry name" value="IPMI_cat"/>
</dbReference>
<dbReference type="NCBIfam" id="TIGR00170">
    <property type="entry name" value="leuC"/>
    <property type="match status" value="1"/>
</dbReference>
<dbReference type="NCBIfam" id="NF004016">
    <property type="entry name" value="PRK05478.1"/>
    <property type="match status" value="1"/>
</dbReference>
<dbReference type="NCBIfam" id="NF009116">
    <property type="entry name" value="PRK12466.1"/>
    <property type="match status" value="1"/>
</dbReference>
<dbReference type="PANTHER" id="PTHR43822:SF9">
    <property type="entry name" value="3-ISOPROPYLMALATE DEHYDRATASE"/>
    <property type="match status" value="1"/>
</dbReference>
<dbReference type="PANTHER" id="PTHR43822">
    <property type="entry name" value="HOMOACONITASE, MITOCHONDRIAL-RELATED"/>
    <property type="match status" value="1"/>
</dbReference>
<dbReference type="Pfam" id="PF00330">
    <property type="entry name" value="Aconitase"/>
    <property type="match status" value="1"/>
</dbReference>
<dbReference type="PRINTS" id="PR00415">
    <property type="entry name" value="ACONITASE"/>
</dbReference>
<dbReference type="SUPFAM" id="SSF53732">
    <property type="entry name" value="Aconitase iron-sulfur domain"/>
    <property type="match status" value="1"/>
</dbReference>
<dbReference type="PROSITE" id="PS00450">
    <property type="entry name" value="ACONITASE_1"/>
    <property type="match status" value="1"/>
</dbReference>
<dbReference type="PROSITE" id="PS01244">
    <property type="entry name" value="ACONITASE_2"/>
    <property type="match status" value="1"/>
</dbReference>
<accession>Q2T7H8</accession>
<feature type="chain" id="PRO_1000063542" description="3-isopropylmalate dehydratase large subunit">
    <location>
        <begin position="1"/>
        <end position="469"/>
    </location>
</feature>
<feature type="binding site" evidence="1">
    <location>
        <position position="347"/>
    </location>
    <ligand>
        <name>[4Fe-4S] cluster</name>
        <dbReference type="ChEBI" id="CHEBI:49883"/>
    </ligand>
</feature>
<feature type="binding site" evidence="1">
    <location>
        <position position="410"/>
    </location>
    <ligand>
        <name>[4Fe-4S] cluster</name>
        <dbReference type="ChEBI" id="CHEBI:49883"/>
    </ligand>
</feature>
<feature type="binding site" evidence="1">
    <location>
        <position position="413"/>
    </location>
    <ligand>
        <name>[4Fe-4S] cluster</name>
        <dbReference type="ChEBI" id="CHEBI:49883"/>
    </ligand>
</feature>
<proteinExistence type="inferred from homology"/>
<gene>
    <name evidence="1" type="primary">leuC</name>
    <name type="ordered locus">BTH_II0672</name>
</gene>
<name>LEUC_BURTA</name>
<sequence>MAQTLYDKLWNSHVVHTEEDGTALLYIDRQLLHEVTSPQAFEGLKLAQRPVWRISANLAVSDHNVPTTDRSHGIADPVSKLQVDTLDANCDAYGITQFKMNDVRQGIVHIIGPEQGATLPGMTIVCGDSHTSTHGAFGALAHGIGTSEVEHVLATQTLLQKKSKNMLVKVEGQLPRGCTAKDIVLAIIGKIGTAGGTGYAIEFGGSTIRALTMEGRMTVCNMAIEAGARAGMVAVDDTTVEYLKGRPFVPTGAQWDQAVEYWKTFKSDEGAQFDRVVELNAAEIVPQVTWGTSPEMVTSIDGRVPDPEREKDPVKRDAMERALAYMALTPNTPIEAIKVDKIFIGSCTNARIEDIRAAAYVVKKLNRRVAPNVRLAMVVPGSGLVKAQAEREGLDKVFTEAGFEWREPGCSMCLAMNADRLEPGERCASTSNRNFEGRQGQGGRTHLVSPAMAAAAAIEGHFVDIRRLG</sequence>
<organism>
    <name type="scientific">Burkholderia thailandensis (strain ATCC 700388 / DSM 13276 / CCUG 48851 / CIP 106301 / E264)</name>
    <dbReference type="NCBI Taxonomy" id="271848"/>
    <lineage>
        <taxon>Bacteria</taxon>
        <taxon>Pseudomonadati</taxon>
        <taxon>Pseudomonadota</taxon>
        <taxon>Betaproteobacteria</taxon>
        <taxon>Burkholderiales</taxon>
        <taxon>Burkholderiaceae</taxon>
        <taxon>Burkholderia</taxon>
        <taxon>pseudomallei group</taxon>
    </lineage>
</organism>
<protein>
    <recommendedName>
        <fullName evidence="1">3-isopropylmalate dehydratase large subunit</fullName>
        <ecNumber evidence="1">4.2.1.33</ecNumber>
    </recommendedName>
    <alternativeName>
        <fullName evidence="1">Alpha-IPM isomerase</fullName>
        <shortName evidence="1">IPMI</shortName>
    </alternativeName>
    <alternativeName>
        <fullName evidence="1">Isopropylmalate isomerase</fullName>
    </alternativeName>
</protein>
<reference key="1">
    <citation type="journal article" date="2005" name="BMC Genomics">
        <title>Bacterial genome adaptation to niches: divergence of the potential virulence genes in three Burkholderia species of different survival strategies.</title>
        <authorList>
            <person name="Kim H.S."/>
            <person name="Schell M.A."/>
            <person name="Yu Y."/>
            <person name="Ulrich R.L."/>
            <person name="Sarria S.H."/>
            <person name="Nierman W.C."/>
            <person name="DeShazer D."/>
        </authorList>
    </citation>
    <scope>NUCLEOTIDE SEQUENCE [LARGE SCALE GENOMIC DNA]</scope>
    <source>
        <strain>ATCC 700388 / DSM 13276 / CCUG 48851 / CIP 106301 / E264</strain>
    </source>
</reference>
<comment type="function">
    <text evidence="1">Catalyzes the isomerization between 2-isopropylmalate and 3-isopropylmalate, via the formation of 2-isopropylmaleate.</text>
</comment>
<comment type="catalytic activity">
    <reaction evidence="1">
        <text>(2R,3S)-3-isopropylmalate = (2S)-2-isopropylmalate</text>
        <dbReference type="Rhea" id="RHEA:32287"/>
        <dbReference type="ChEBI" id="CHEBI:1178"/>
        <dbReference type="ChEBI" id="CHEBI:35121"/>
        <dbReference type="EC" id="4.2.1.33"/>
    </reaction>
</comment>
<comment type="cofactor">
    <cofactor evidence="1">
        <name>[4Fe-4S] cluster</name>
        <dbReference type="ChEBI" id="CHEBI:49883"/>
    </cofactor>
    <text evidence="1">Binds 1 [4Fe-4S] cluster per subunit.</text>
</comment>
<comment type="pathway">
    <text evidence="1">Amino-acid biosynthesis; L-leucine biosynthesis; L-leucine from 3-methyl-2-oxobutanoate: step 2/4.</text>
</comment>
<comment type="subunit">
    <text evidence="1">Heterodimer of LeuC and LeuD.</text>
</comment>
<comment type="similarity">
    <text evidence="1">Belongs to the aconitase/IPM isomerase family. LeuC type 1 subfamily.</text>
</comment>
<evidence type="ECO:0000255" key="1">
    <source>
        <dbReference type="HAMAP-Rule" id="MF_01026"/>
    </source>
</evidence>